<accession>B4RLX9</accession>
<proteinExistence type="inferred from homology"/>
<evidence type="ECO:0000255" key="1">
    <source>
        <dbReference type="HAMAP-Rule" id="MF_00214"/>
    </source>
</evidence>
<organism>
    <name type="scientific">Neisseria gonorrhoeae (strain NCCP11945)</name>
    <dbReference type="NCBI Taxonomy" id="521006"/>
    <lineage>
        <taxon>Bacteria</taxon>
        <taxon>Pseudomonadati</taxon>
        <taxon>Pseudomonadota</taxon>
        <taxon>Betaproteobacteria</taxon>
        <taxon>Neisseriales</taxon>
        <taxon>Neisseriaceae</taxon>
        <taxon>Neisseria</taxon>
    </lineage>
</organism>
<feature type="chain" id="PRO_1000099911" description="3-dehydroquinate dehydratase">
    <location>
        <begin position="1"/>
        <end position="254"/>
    </location>
</feature>
<feature type="active site" description="Proton donor/acceptor" evidence="1">
    <location>
        <position position="144"/>
    </location>
</feature>
<feature type="active site" description="Schiff-base intermediate with substrate" evidence="1">
    <location>
        <position position="171"/>
    </location>
</feature>
<feature type="binding site" evidence="1">
    <location>
        <begin position="47"/>
        <end position="49"/>
    </location>
    <ligand>
        <name>3-dehydroquinate</name>
        <dbReference type="ChEBI" id="CHEBI:32364"/>
    </ligand>
</feature>
<feature type="binding site" evidence="1">
    <location>
        <position position="83"/>
    </location>
    <ligand>
        <name>3-dehydroquinate</name>
        <dbReference type="ChEBI" id="CHEBI:32364"/>
    </ligand>
</feature>
<feature type="binding site" evidence="1">
    <location>
        <position position="213"/>
    </location>
    <ligand>
        <name>3-dehydroquinate</name>
        <dbReference type="ChEBI" id="CHEBI:32364"/>
    </ligand>
</feature>
<feature type="binding site" evidence="1">
    <location>
        <position position="232"/>
    </location>
    <ligand>
        <name>3-dehydroquinate</name>
        <dbReference type="ChEBI" id="CHEBI:32364"/>
    </ligand>
</feature>
<feature type="binding site" evidence="1">
    <location>
        <position position="236"/>
    </location>
    <ligand>
        <name>3-dehydroquinate</name>
        <dbReference type="ChEBI" id="CHEBI:32364"/>
    </ligand>
</feature>
<comment type="function">
    <text evidence="1">Involved in the third step of the chorismate pathway, which leads to the biosynthesis of aromatic amino acids. Catalyzes the cis-dehydration of 3-dehydroquinate (DHQ) and introduces the first double bond of the aromatic ring to yield 3-dehydroshikimate.</text>
</comment>
<comment type="catalytic activity">
    <reaction evidence="1">
        <text>3-dehydroquinate = 3-dehydroshikimate + H2O</text>
        <dbReference type="Rhea" id="RHEA:21096"/>
        <dbReference type="ChEBI" id="CHEBI:15377"/>
        <dbReference type="ChEBI" id="CHEBI:16630"/>
        <dbReference type="ChEBI" id="CHEBI:32364"/>
        <dbReference type="EC" id="4.2.1.10"/>
    </reaction>
</comment>
<comment type="pathway">
    <text evidence="1">Metabolic intermediate biosynthesis; chorismate biosynthesis; chorismate from D-erythrose 4-phosphate and phosphoenolpyruvate: step 3/7.</text>
</comment>
<comment type="subunit">
    <text evidence="1">Homodimer.</text>
</comment>
<comment type="similarity">
    <text evidence="1">Belongs to the type-I 3-dehydroquinase family.</text>
</comment>
<protein>
    <recommendedName>
        <fullName evidence="1">3-dehydroquinate dehydratase</fullName>
        <shortName evidence="1">3-dehydroquinase</shortName>
        <ecNumber evidence="1">4.2.1.10</ecNumber>
    </recommendedName>
    <alternativeName>
        <fullName evidence="1">Type I DHQase</fullName>
    </alternativeName>
    <alternativeName>
        <fullName evidence="1">Type I dehydroquinase</fullName>
        <shortName evidence="1">DHQ1</shortName>
    </alternativeName>
</protein>
<dbReference type="EC" id="4.2.1.10" evidence="1"/>
<dbReference type="EMBL" id="CP001050">
    <property type="protein sequence ID" value="ACF29816.1"/>
    <property type="molecule type" value="Genomic_DNA"/>
</dbReference>
<dbReference type="RefSeq" id="WP_003688696.1">
    <property type="nucleotide sequence ID" value="NC_011035.1"/>
</dbReference>
<dbReference type="SMR" id="B4RLX9"/>
<dbReference type="GeneID" id="66753084"/>
<dbReference type="KEGG" id="ngk:NGK_1139"/>
<dbReference type="HOGENOM" id="CLU_064444_0_0_4"/>
<dbReference type="UniPathway" id="UPA00053">
    <property type="reaction ID" value="UER00086"/>
</dbReference>
<dbReference type="Proteomes" id="UP000002564">
    <property type="component" value="Chromosome"/>
</dbReference>
<dbReference type="GO" id="GO:0003855">
    <property type="term" value="F:3-dehydroquinate dehydratase activity"/>
    <property type="evidence" value="ECO:0007669"/>
    <property type="project" value="UniProtKB-UniRule"/>
</dbReference>
<dbReference type="GO" id="GO:0046279">
    <property type="term" value="P:3,4-dihydroxybenzoate biosynthetic process"/>
    <property type="evidence" value="ECO:0007669"/>
    <property type="project" value="TreeGrafter"/>
</dbReference>
<dbReference type="GO" id="GO:0008652">
    <property type="term" value="P:amino acid biosynthetic process"/>
    <property type="evidence" value="ECO:0007669"/>
    <property type="project" value="UniProtKB-KW"/>
</dbReference>
<dbReference type="GO" id="GO:0009073">
    <property type="term" value="P:aromatic amino acid family biosynthetic process"/>
    <property type="evidence" value="ECO:0007669"/>
    <property type="project" value="UniProtKB-KW"/>
</dbReference>
<dbReference type="GO" id="GO:0009423">
    <property type="term" value="P:chorismate biosynthetic process"/>
    <property type="evidence" value="ECO:0007669"/>
    <property type="project" value="UniProtKB-UniRule"/>
</dbReference>
<dbReference type="CDD" id="cd00502">
    <property type="entry name" value="DHQase_I"/>
    <property type="match status" value="1"/>
</dbReference>
<dbReference type="FunFam" id="3.20.20.70:FF:000047">
    <property type="entry name" value="3-dehydroquinate dehydratase"/>
    <property type="match status" value="1"/>
</dbReference>
<dbReference type="Gene3D" id="3.20.20.70">
    <property type="entry name" value="Aldolase class I"/>
    <property type="match status" value="1"/>
</dbReference>
<dbReference type="HAMAP" id="MF_00214">
    <property type="entry name" value="AroD"/>
    <property type="match status" value="1"/>
</dbReference>
<dbReference type="InterPro" id="IPR013785">
    <property type="entry name" value="Aldolase_TIM"/>
</dbReference>
<dbReference type="InterPro" id="IPR001381">
    <property type="entry name" value="DHquinase_I"/>
</dbReference>
<dbReference type="InterPro" id="IPR050146">
    <property type="entry name" value="Type-I_3-dehydroquinase"/>
</dbReference>
<dbReference type="NCBIfam" id="TIGR01093">
    <property type="entry name" value="aroD"/>
    <property type="match status" value="1"/>
</dbReference>
<dbReference type="PANTHER" id="PTHR43699">
    <property type="entry name" value="3-DEHYDROQUINATE DEHYDRATASE"/>
    <property type="match status" value="1"/>
</dbReference>
<dbReference type="PANTHER" id="PTHR43699:SF1">
    <property type="entry name" value="3-DEHYDROQUINATE DEHYDRATASE"/>
    <property type="match status" value="1"/>
</dbReference>
<dbReference type="Pfam" id="PF01487">
    <property type="entry name" value="DHquinase_I"/>
    <property type="match status" value="1"/>
</dbReference>
<dbReference type="SUPFAM" id="SSF51569">
    <property type="entry name" value="Aldolase"/>
    <property type="match status" value="1"/>
</dbReference>
<sequence length="254" mass="27279">MHTSLTVKNTVIGSGRTKIAVPLVARDAADLSSVLSQIKNLPFDIVEFRADFLECAGSIGEVLRHTQAVRDALPDKPLLFTFRRHCEGGSFPCSDDYYFELLDALIESRLPDIIDIELFSGETAVRRAVANAQKNGIAALLCNHEFHRTPPQEEIVCRLKQMEDCGADICKIAVMPQSSEDVLTLLSATLEAKRLVAKPVITMSMGQTGAVSRLAGQVFGSSITFGSGTQNSAPGQIGVSALRAALDCLESGAD</sequence>
<name>AROD_NEIG2</name>
<reference key="1">
    <citation type="journal article" date="2008" name="J. Bacteriol.">
        <title>Complete genome sequence of Neisseria gonorrhoeae NCCP11945.</title>
        <authorList>
            <person name="Chung G.T."/>
            <person name="Yoo J.S."/>
            <person name="Oh H.B."/>
            <person name="Lee Y.S."/>
            <person name="Cha S.H."/>
            <person name="Kim S.J."/>
            <person name="Yoo C.K."/>
        </authorList>
    </citation>
    <scope>NUCLEOTIDE SEQUENCE [LARGE SCALE GENOMIC DNA]</scope>
    <source>
        <strain>NCCP11945</strain>
    </source>
</reference>
<keyword id="KW-0028">Amino-acid biosynthesis</keyword>
<keyword id="KW-0057">Aromatic amino acid biosynthesis</keyword>
<keyword id="KW-0456">Lyase</keyword>
<keyword id="KW-0704">Schiff base</keyword>
<gene>
    <name evidence="1" type="primary">aroD</name>
    <name type="ordered locus">NGK_1139</name>
</gene>